<accession>Q8PWN9</accession>
<name>ARCH_METMA</name>
<proteinExistence type="inferred from homology"/>
<reference key="1">
    <citation type="journal article" date="2002" name="J. Mol. Microbiol. Biotechnol.">
        <title>The genome of Methanosarcina mazei: evidence for lateral gene transfer between Bacteria and Archaea.</title>
        <authorList>
            <person name="Deppenmeier U."/>
            <person name="Johann A."/>
            <person name="Hartsch T."/>
            <person name="Merkl R."/>
            <person name="Schmitz R.A."/>
            <person name="Martinez-Arias R."/>
            <person name="Henne A."/>
            <person name="Wiezer A."/>
            <person name="Baeumer S."/>
            <person name="Jacobi C."/>
            <person name="Brueggemann H."/>
            <person name="Lienard T."/>
            <person name="Christmann A."/>
            <person name="Boemecke M."/>
            <person name="Steckel S."/>
            <person name="Bhattacharyya A."/>
            <person name="Lykidis A."/>
            <person name="Overbeek R."/>
            <person name="Klenk H.-P."/>
            <person name="Gunsalus R.P."/>
            <person name="Fritz H.-J."/>
            <person name="Gottschalk G."/>
        </authorList>
    </citation>
    <scope>NUCLEOTIDE SEQUENCE [LARGE SCALE GENOMIC DNA]</scope>
    <source>
        <strain>ATCC BAA-159 / DSM 3647 / Goe1 / Go1 / JCM 11833 / OCM 88</strain>
    </source>
</reference>
<keyword id="KW-0106">Calcium</keyword>
<keyword id="KW-0479">Metal-binding</keyword>
<keyword id="KW-0819">tRNA processing</keyword>
<dbReference type="EMBL" id="AE008384">
    <property type="protein sequence ID" value="AAM31233.1"/>
    <property type="molecule type" value="Genomic_DNA"/>
</dbReference>
<dbReference type="RefSeq" id="WP_011033483.1">
    <property type="nucleotide sequence ID" value="NC_003901.1"/>
</dbReference>
<dbReference type="SMR" id="Q8PWN9"/>
<dbReference type="KEGG" id="mma:MM_1537"/>
<dbReference type="PATRIC" id="fig|192952.21.peg.1777"/>
<dbReference type="eggNOG" id="arCOG04055">
    <property type="taxonomic scope" value="Archaea"/>
</dbReference>
<dbReference type="HOGENOM" id="CLU_111362_3_0_2"/>
<dbReference type="Proteomes" id="UP000000595">
    <property type="component" value="Chromosome"/>
</dbReference>
<dbReference type="GO" id="GO:0005509">
    <property type="term" value="F:calcium ion binding"/>
    <property type="evidence" value="ECO:0007669"/>
    <property type="project" value="UniProtKB-UniRule"/>
</dbReference>
<dbReference type="GO" id="GO:0006388">
    <property type="term" value="P:tRNA splicing, via endonucleolytic cleavage and ligation"/>
    <property type="evidence" value="ECO:0007669"/>
    <property type="project" value="UniProtKB-UniRule"/>
</dbReference>
<dbReference type="Gene3D" id="3.55.10.10">
    <property type="entry name" value="Archease domain"/>
    <property type="match status" value="1"/>
</dbReference>
<dbReference type="HAMAP" id="MF_01222">
    <property type="entry name" value="Archease_arch"/>
    <property type="match status" value="1"/>
</dbReference>
<dbReference type="InterPro" id="IPR002804">
    <property type="entry name" value="Archease"/>
</dbReference>
<dbReference type="InterPro" id="IPR022952">
    <property type="entry name" value="Archease_arc"/>
</dbReference>
<dbReference type="InterPro" id="IPR023572">
    <property type="entry name" value="Archease_dom"/>
</dbReference>
<dbReference type="InterPro" id="IPR036820">
    <property type="entry name" value="Archease_dom_sf"/>
</dbReference>
<dbReference type="NCBIfam" id="NF001617">
    <property type="entry name" value="PRK00407.1"/>
    <property type="match status" value="1"/>
</dbReference>
<dbReference type="PANTHER" id="PTHR12682">
    <property type="entry name" value="ARCHEASE"/>
    <property type="match status" value="1"/>
</dbReference>
<dbReference type="PANTHER" id="PTHR12682:SF11">
    <property type="entry name" value="PROTEIN ARCHEASE"/>
    <property type="match status" value="1"/>
</dbReference>
<dbReference type="Pfam" id="PF01951">
    <property type="entry name" value="Archease"/>
    <property type="match status" value="1"/>
</dbReference>
<dbReference type="SUPFAM" id="SSF69819">
    <property type="entry name" value="MTH1598-like"/>
    <property type="match status" value="1"/>
</dbReference>
<comment type="function">
    <text evidence="1">Activates the tRNA-splicing ligase complex by facilitating the enzymatic turnover of catalytic subunit RtcB. Acts by promoting the guanylylation of RtcB, a key intermediate step in tRNA ligation. Can also alter the NTP specificity of RtcB such that ATP, dGTP or ITP is used efficiently (By similarity).</text>
</comment>
<comment type="similarity">
    <text evidence="2">Belongs to the archease family.</text>
</comment>
<gene>
    <name type="ordered locus">MM_1537</name>
</gene>
<protein>
    <recommendedName>
        <fullName evidence="2">Protein archease</fullName>
    </recommendedName>
</protein>
<sequence>MPSQGKKYEYLEHTADIKFLAYGETVEEVFENAALAMFNVIIDTEKVSGETEREVLLTSPDLESLLVDWLSELLYLFEVDEVVFWKFQVEEIREEEGEYSIKALASGEKYYPESHPFETEIKAVTYNQLELEKTAGGWKAQVVVDI</sequence>
<evidence type="ECO:0000250" key="1"/>
<evidence type="ECO:0000255" key="2">
    <source>
        <dbReference type="HAMAP-Rule" id="MF_01222"/>
    </source>
</evidence>
<feature type="chain" id="PRO_0000068845" description="Protein archease">
    <location>
        <begin position="1"/>
        <end position="146"/>
    </location>
</feature>
<feature type="binding site" evidence="1">
    <location>
        <position position="16"/>
    </location>
    <ligand>
        <name>Ca(2+)</name>
        <dbReference type="ChEBI" id="CHEBI:29108"/>
    </ligand>
</feature>
<feature type="binding site" evidence="1">
    <location>
        <position position="145"/>
    </location>
    <ligand>
        <name>Ca(2+)</name>
        <dbReference type="ChEBI" id="CHEBI:29108"/>
    </ligand>
</feature>
<feature type="binding site" evidence="1">
    <location>
        <position position="146"/>
    </location>
    <ligand>
        <name>Ca(2+)</name>
        <dbReference type="ChEBI" id="CHEBI:29108"/>
    </ligand>
</feature>
<organism>
    <name type="scientific">Methanosarcina mazei (strain ATCC BAA-159 / DSM 3647 / Goe1 / Go1 / JCM 11833 / OCM 88)</name>
    <name type="common">Methanosarcina frisia</name>
    <dbReference type="NCBI Taxonomy" id="192952"/>
    <lineage>
        <taxon>Archaea</taxon>
        <taxon>Methanobacteriati</taxon>
        <taxon>Methanobacteriota</taxon>
        <taxon>Stenosarchaea group</taxon>
        <taxon>Methanomicrobia</taxon>
        <taxon>Methanosarcinales</taxon>
        <taxon>Methanosarcinaceae</taxon>
        <taxon>Methanosarcina</taxon>
    </lineage>
</organism>